<name>RIMO_PARXL</name>
<dbReference type="EC" id="2.8.4.4" evidence="1"/>
<dbReference type="EMBL" id="CP000270">
    <property type="protein sequence ID" value="ABE30633.1"/>
    <property type="molecule type" value="Genomic_DNA"/>
</dbReference>
<dbReference type="RefSeq" id="WP_011488264.1">
    <property type="nucleotide sequence ID" value="NC_007951.1"/>
</dbReference>
<dbReference type="SMR" id="Q13Z56"/>
<dbReference type="STRING" id="266265.Bxe_A2337"/>
<dbReference type="KEGG" id="bxb:DR64_42"/>
<dbReference type="KEGG" id="bxe:Bxe_A2337"/>
<dbReference type="PATRIC" id="fig|266265.5.peg.2190"/>
<dbReference type="eggNOG" id="COG0621">
    <property type="taxonomic scope" value="Bacteria"/>
</dbReference>
<dbReference type="OrthoDB" id="9805215at2"/>
<dbReference type="Proteomes" id="UP000001817">
    <property type="component" value="Chromosome 1"/>
</dbReference>
<dbReference type="GO" id="GO:0005829">
    <property type="term" value="C:cytosol"/>
    <property type="evidence" value="ECO:0007669"/>
    <property type="project" value="TreeGrafter"/>
</dbReference>
<dbReference type="GO" id="GO:0051539">
    <property type="term" value="F:4 iron, 4 sulfur cluster binding"/>
    <property type="evidence" value="ECO:0007669"/>
    <property type="project" value="UniProtKB-UniRule"/>
</dbReference>
<dbReference type="GO" id="GO:0035599">
    <property type="term" value="F:aspartic acid methylthiotransferase activity"/>
    <property type="evidence" value="ECO:0007669"/>
    <property type="project" value="TreeGrafter"/>
</dbReference>
<dbReference type="GO" id="GO:0046872">
    <property type="term" value="F:metal ion binding"/>
    <property type="evidence" value="ECO:0007669"/>
    <property type="project" value="UniProtKB-KW"/>
</dbReference>
<dbReference type="GO" id="GO:0103039">
    <property type="term" value="F:protein methylthiotransferase activity"/>
    <property type="evidence" value="ECO:0007669"/>
    <property type="project" value="UniProtKB-EC"/>
</dbReference>
<dbReference type="GO" id="GO:0006400">
    <property type="term" value="P:tRNA modification"/>
    <property type="evidence" value="ECO:0007669"/>
    <property type="project" value="InterPro"/>
</dbReference>
<dbReference type="CDD" id="cd01335">
    <property type="entry name" value="Radical_SAM"/>
    <property type="match status" value="1"/>
</dbReference>
<dbReference type="FunFam" id="3.40.50.12160:FF:000002">
    <property type="entry name" value="Ribosomal protein S12 methylthiotransferase RimO"/>
    <property type="match status" value="1"/>
</dbReference>
<dbReference type="FunFam" id="3.80.30.20:FF:000001">
    <property type="entry name" value="tRNA-2-methylthio-N(6)-dimethylallyladenosine synthase 2"/>
    <property type="match status" value="1"/>
</dbReference>
<dbReference type="Gene3D" id="3.40.50.12160">
    <property type="entry name" value="Methylthiotransferase, N-terminal domain"/>
    <property type="match status" value="1"/>
</dbReference>
<dbReference type="Gene3D" id="2.40.50.140">
    <property type="entry name" value="Nucleic acid-binding proteins"/>
    <property type="match status" value="1"/>
</dbReference>
<dbReference type="Gene3D" id="3.80.30.20">
    <property type="entry name" value="tm_1862 like domain"/>
    <property type="match status" value="1"/>
</dbReference>
<dbReference type="HAMAP" id="MF_01865">
    <property type="entry name" value="MTTase_RimO"/>
    <property type="match status" value="1"/>
</dbReference>
<dbReference type="InterPro" id="IPR006638">
    <property type="entry name" value="Elp3/MiaA/NifB-like_rSAM"/>
</dbReference>
<dbReference type="InterPro" id="IPR005839">
    <property type="entry name" value="Methylthiotransferase"/>
</dbReference>
<dbReference type="InterPro" id="IPR020612">
    <property type="entry name" value="Methylthiotransferase_CS"/>
</dbReference>
<dbReference type="InterPro" id="IPR013848">
    <property type="entry name" value="Methylthiotransferase_N"/>
</dbReference>
<dbReference type="InterPro" id="IPR038135">
    <property type="entry name" value="Methylthiotransferase_N_sf"/>
</dbReference>
<dbReference type="InterPro" id="IPR012340">
    <property type="entry name" value="NA-bd_OB-fold"/>
</dbReference>
<dbReference type="InterPro" id="IPR005840">
    <property type="entry name" value="Ribosomal_uS12_MeSTrfase_RimO"/>
</dbReference>
<dbReference type="InterPro" id="IPR007197">
    <property type="entry name" value="rSAM"/>
</dbReference>
<dbReference type="InterPro" id="IPR023404">
    <property type="entry name" value="rSAM_horseshoe"/>
</dbReference>
<dbReference type="InterPro" id="IPR002792">
    <property type="entry name" value="TRAM_dom"/>
</dbReference>
<dbReference type="NCBIfam" id="TIGR01125">
    <property type="entry name" value="30S ribosomal protein S12 methylthiotransferase RimO"/>
    <property type="match status" value="1"/>
</dbReference>
<dbReference type="NCBIfam" id="TIGR00089">
    <property type="entry name" value="MiaB/RimO family radical SAM methylthiotransferase"/>
    <property type="match status" value="1"/>
</dbReference>
<dbReference type="PANTHER" id="PTHR43837">
    <property type="entry name" value="RIBOSOMAL PROTEIN S12 METHYLTHIOTRANSFERASE RIMO"/>
    <property type="match status" value="1"/>
</dbReference>
<dbReference type="PANTHER" id="PTHR43837:SF1">
    <property type="entry name" value="RIBOSOMAL PROTEIN US12 METHYLTHIOTRANSFERASE RIMO"/>
    <property type="match status" value="1"/>
</dbReference>
<dbReference type="Pfam" id="PF04055">
    <property type="entry name" value="Radical_SAM"/>
    <property type="match status" value="1"/>
</dbReference>
<dbReference type="Pfam" id="PF18693">
    <property type="entry name" value="TRAM_2"/>
    <property type="match status" value="1"/>
</dbReference>
<dbReference type="Pfam" id="PF00919">
    <property type="entry name" value="UPF0004"/>
    <property type="match status" value="1"/>
</dbReference>
<dbReference type="SFLD" id="SFLDG01082">
    <property type="entry name" value="B12-binding_domain_containing"/>
    <property type="match status" value="1"/>
</dbReference>
<dbReference type="SFLD" id="SFLDS00029">
    <property type="entry name" value="Radical_SAM"/>
    <property type="match status" value="1"/>
</dbReference>
<dbReference type="SFLD" id="SFLDF00274">
    <property type="entry name" value="ribosomal_protein_S12_methylth"/>
    <property type="match status" value="1"/>
</dbReference>
<dbReference type="SMART" id="SM00729">
    <property type="entry name" value="Elp3"/>
    <property type="match status" value="1"/>
</dbReference>
<dbReference type="SUPFAM" id="SSF102114">
    <property type="entry name" value="Radical SAM enzymes"/>
    <property type="match status" value="1"/>
</dbReference>
<dbReference type="PROSITE" id="PS51449">
    <property type="entry name" value="MTTASE_N"/>
    <property type="match status" value="1"/>
</dbReference>
<dbReference type="PROSITE" id="PS01278">
    <property type="entry name" value="MTTASE_RADICAL"/>
    <property type="match status" value="1"/>
</dbReference>
<dbReference type="PROSITE" id="PS51918">
    <property type="entry name" value="RADICAL_SAM"/>
    <property type="match status" value="1"/>
</dbReference>
<dbReference type="PROSITE" id="PS50926">
    <property type="entry name" value="TRAM"/>
    <property type="match status" value="1"/>
</dbReference>
<proteinExistence type="inferred from homology"/>
<organism>
    <name type="scientific">Paraburkholderia xenovorans (strain LB400)</name>
    <dbReference type="NCBI Taxonomy" id="266265"/>
    <lineage>
        <taxon>Bacteria</taxon>
        <taxon>Pseudomonadati</taxon>
        <taxon>Pseudomonadota</taxon>
        <taxon>Betaproteobacteria</taxon>
        <taxon>Burkholderiales</taxon>
        <taxon>Burkholderiaceae</taxon>
        <taxon>Paraburkholderia</taxon>
    </lineage>
</organism>
<evidence type="ECO:0000255" key="1">
    <source>
        <dbReference type="HAMAP-Rule" id="MF_01865"/>
    </source>
</evidence>
<evidence type="ECO:0000255" key="2">
    <source>
        <dbReference type="PROSITE-ProRule" id="PRU01266"/>
    </source>
</evidence>
<reference key="1">
    <citation type="journal article" date="2006" name="Proc. Natl. Acad. Sci. U.S.A.">
        <title>Burkholderia xenovorans LB400 harbors a multi-replicon, 9.73-Mbp genome shaped for versatility.</title>
        <authorList>
            <person name="Chain P.S.G."/>
            <person name="Denef V.J."/>
            <person name="Konstantinidis K.T."/>
            <person name="Vergez L.M."/>
            <person name="Agullo L."/>
            <person name="Reyes V.L."/>
            <person name="Hauser L."/>
            <person name="Cordova M."/>
            <person name="Gomez L."/>
            <person name="Gonzalez M."/>
            <person name="Land M."/>
            <person name="Lao V."/>
            <person name="Larimer F."/>
            <person name="LiPuma J.J."/>
            <person name="Mahenthiralingam E."/>
            <person name="Malfatti S.A."/>
            <person name="Marx C.J."/>
            <person name="Parnell J.J."/>
            <person name="Ramette A."/>
            <person name="Richardson P."/>
            <person name="Seeger M."/>
            <person name="Smith D."/>
            <person name="Spilker T."/>
            <person name="Sul W.J."/>
            <person name="Tsoi T.V."/>
            <person name="Ulrich L.E."/>
            <person name="Zhulin I.B."/>
            <person name="Tiedje J.M."/>
        </authorList>
    </citation>
    <scope>NUCLEOTIDE SEQUENCE [LARGE SCALE GENOMIC DNA]</scope>
    <source>
        <strain>LB400</strain>
    </source>
</reference>
<comment type="function">
    <text evidence="1">Catalyzes the methylthiolation of an aspartic acid residue of ribosomal protein uS12.</text>
</comment>
<comment type="catalytic activity">
    <reaction evidence="1">
        <text>L-aspartate(89)-[ribosomal protein uS12]-hydrogen + (sulfur carrier)-SH + AH2 + 2 S-adenosyl-L-methionine = 3-methylsulfanyl-L-aspartate(89)-[ribosomal protein uS12]-hydrogen + (sulfur carrier)-H + 5'-deoxyadenosine + L-methionine + A + S-adenosyl-L-homocysteine + 2 H(+)</text>
        <dbReference type="Rhea" id="RHEA:37087"/>
        <dbReference type="Rhea" id="RHEA-COMP:10460"/>
        <dbReference type="Rhea" id="RHEA-COMP:10461"/>
        <dbReference type="Rhea" id="RHEA-COMP:14737"/>
        <dbReference type="Rhea" id="RHEA-COMP:14739"/>
        <dbReference type="ChEBI" id="CHEBI:13193"/>
        <dbReference type="ChEBI" id="CHEBI:15378"/>
        <dbReference type="ChEBI" id="CHEBI:17319"/>
        <dbReference type="ChEBI" id="CHEBI:17499"/>
        <dbReference type="ChEBI" id="CHEBI:29917"/>
        <dbReference type="ChEBI" id="CHEBI:29961"/>
        <dbReference type="ChEBI" id="CHEBI:57844"/>
        <dbReference type="ChEBI" id="CHEBI:57856"/>
        <dbReference type="ChEBI" id="CHEBI:59789"/>
        <dbReference type="ChEBI" id="CHEBI:64428"/>
        <dbReference type="ChEBI" id="CHEBI:73599"/>
        <dbReference type="EC" id="2.8.4.4"/>
    </reaction>
</comment>
<comment type="cofactor">
    <cofactor evidence="1">
        <name>[4Fe-4S] cluster</name>
        <dbReference type="ChEBI" id="CHEBI:49883"/>
    </cofactor>
    <text evidence="1">Binds 2 [4Fe-4S] clusters. One cluster is coordinated with 3 cysteines and an exchangeable S-adenosyl-L-methionine.</text>
</comment>
<comment type="subcellular location">
    <subcellularLocation>
        <location evidence="1">Cytoplasm</location>
    </subcellularLocation>
</comment>
<comment type="similarity">
    <text evidence="1">Belongs to the methylthiotransferase family. RimO subfamily.</text>
</comment>
<keyword id="KW-0004">4Fe-4S</keyword>
<keyword id="KW-0963">Cytoplasm</keyword>
<keyword id="KW-0408">Iron</keyword>
<keyword id="KW-0411">Iron-sulfur</keyword>
<keyword id="KW-0479">Metal-binding</keyword>
<keyword id="KW-1185">Reference proteome</keyword>
<keyword id="KW-0949">S-adenosyl-L-methionine</keyword>
<keyword id="KW-0808">Transferase</keyword>
<accession>Q13Z56</accession>
<protein>
    <recommendedName>
        <fullName evidence="1">Ribosomal protein uS12 methylthiotransferase RimO</fullName>
        <shortName evidence="1">uS12 MTTase</shortName>
        <shortName evidence="1">uS12 methylthiotransferase</shortName>
        <ecNumber evidence="1">2.8.4.4</ecNumber>
    </recommendedName>
    <alternativeName>
        <fullName evidence="1">Ribosomal protein uS12 (aspartate-C(3))-methylthiotransferase</fullName>
    </alternativeName>
    <alternativeName>
        <fullName evidence="1">Ribosome maturation factor RimO</fullName>
    </alternativeName>
</protein>
<feature type="chain" id="PRO_0000374748" description="Ribosomal protein uS12 methylthiotransferase RimO">
    <location>
        <begin position="1"/>
        <end position="461"/>
    </location>
</feature>
<feature type="domain" description="MTTase N-terminal" evidence="1">
    <location>
        <begin position="13"/>
        <end position="128"/>
    </location>
</feature>
<feature type="domain" description="Radical SAM core" evidence="2">
    <location>
        <begin position="145"/>
        <end position="390"/>
    </location>
</feature>
<feature type="domain" description="TRAM" evidence="1">
    <location>
        <begin position="393"/>
        <end position="461"/>
    </location>
</feature>
<feature type="binding site" evidence="1">
    <location>
        <position position="22"/>
    </location>
    <ligand>
        <name>[4Fe-4S] cluster</name>
        <dbReference type="ChEBI" id="CHEBI:49883"/>
        <label>1</label>
    </ligand>
</feature>
<feature type="binding site" evidence="1">
    <location>
        <position position="58"/>
    </location>
    <ligand>
        <name>[4Fe-4S] cluster</name>
        <dbReference type="ChEBI" id="CHEBI:49883"/>
        <label>1</label>
    </ligand>
</feature>
<feature type="binding site" evidence="1">
    <location>
        <position position="87"/>
    </location>
    <ligand>
        <name>[4Fe-4S] cluster</name>
        <dbReference type="ChEBI" id="CHEBI:49883"/>
        <label>1</label>
    </ligand>
</feature>
<feature type="binding site" evidence="1">
    <location>
        <position position="159"/>
    </location>
    <ligand>
        <name>[4Fe-4S] cluster</name>
        <dbReference type="ChEBI" id="CHEBI:49883"/>
        <label>2</label>
        <note>4Fe-4S-S-AdoMet</note>
    </ligand>
</feature>
<feature type="binding site" evidence="1">
    <location>
        <position position="163"/>
    </location>
    <ligand>
        <name>[4Fe-4S] cluster</name>
        <dbReference type="ChEBI" id="CHEBI:49883"/>
        <label>2</label>
        <note>4Fe-4S-S-AdoMet</note>
    </ligand>
</feature>
<feature type="binding site" evidence="1">
    <location>
        <position position="166"/>
    </location>
    <ligand>
        <name>[4Fe-4S] cluster</name>
        <dbReference type="ChEBI" id="CHEBI:49883"/>
        <label>2</label>
        <note>4Fe-4S-S-AdoMet</note>
    </ligand>
</feature>
<gene>
    <name evidence="1" type="primary">rimO</name>
    <name type="ordered locus">Bxeno_A2095</name>
    <name type="ORF">Bxe_A2337</name>
</gene>
<sequence length="461" mass="50236">MSATPPIAPIATPKVGFVSLGCPKALVDSEQIITQLRAEGYEISGTYDGADLVVVNTCGFIDEAVQESLDAIGEALNENGKVIVTGCLGAKKSASGSGLIEEVHPKVLAVTGPHALGEVMQHVHMHLPKPHDPFVDLVPAAGVKLTPRHYAYLKISEGCNHRCTFCIIPSMRGDLVSRPVADVMLEAENLFKSGVKELLVISQDTSAYGVDVKYRTGFWNGKPIKTRMTDLVGALGELAAQYGAWVRLHYVYPYPSVDEVIPMMAEGPFKGHVLPYLDVPFQHAHPEVLKRMKRPANAEKVMERVKKWREMCPDLTIRSTFIAGFPGETEEQFQTLLDFIREAELDRVGCFAYSPVEGATANELDGALPDEVREERRARFMEVAEEVSAKRIAKKVGKTLKVLVDEINADGGIGRTAADAPEIDGVVYIAPAVKASKRYKVGDFVSVKITGADGHDLWGEV</sequence>